<dbReference type="EC" id="2.7.7.7"/>
<dbReference type="EMBL" id="L04577">
    <property type="protein sequence ID" value="AAA23708.1"/>
    <property type="molecule type" value="Genomic_DNA"/>
</dbReference>
<dbReference type="EMBL" id="L01483">
    <property type="protein sequence ID" value="AAA23696.1"/>
    <property type="molecule type" value="Genomic_DNA"/>
</dbReference>
<dbReference type="EMBL" id="U00096">
    <property type="protein sequence ID" value="AAC74183.1"/>
    <property type="molecule type" value="Genomic_DNA"/>
</dbReference>
<dbReference type="EMBL" id="AP009048">
    <property type="protein sequence ID" value="BAA35906.1"/>
    <property type="molecule type" value="Genomic_DNA"/>
</dbReference>
<dbReference type="PIR" id="S35523">
    <property type="entry name" value="S35523"/>
</dbReference>
<dbReference type="RefSeq" id="NP_415617.1">
    <property type="nucleotide sequence ID" value="NC_000913.3"/>
</dbReference>
<dbReference type="RefSeq" id="WP_001267956.1">
    <property type="nucleotide sequence ID" value="NZ_SSZK01000019.1"/>
</dbReference>
<dbReference type="PDB" id="1A5T">
    <property type="method" value="X-ray"/>
    <property type="resolution" value="2.20 A"/>
    <property type="chains" value="A=1-334"/>
</dbReference>
<dbReference type="PDB" id="1JR3">
    <property type="method" value="X-ray"/>
    <property type="resolution" value="2.70 A"/>
    <property type="chains" value="E=1-334"/>
</dbReference>
<dbReference type="PDB" id="1XXH">
    <property type="method" value="X-ray"/>
    <property type="resolution" value="3.45 A"/>
    <property type="chains" value="E/J=1-334"/>
</dbReference>
<dbReference type="PDB" id="1XXI">
    <property type="method" value="X-ray"/>
    <property type="resolution" value="4.10 A"/>
    <property type="chains" value="E/J=1-334"/>
</dbReference>
<dbReference type="PDB" id="3GLF">
    <property type="method" value="X-ray"/>
    <property type="resolution" value="3.39 A"/>
    <property type="chains" value="E/J=1-334"/>
</dbReference>
<dbReference type="PDB" id="3GLG">
    <property type="method" value="X-ray"/>
    <property type="resolution" value="3.25 A"/>
    <property type="chains" value="E/J=1-334"/>
</dbReference>
<dbReference type="PDB" id="3GLH">
    <property type="method" value="X-ray"/>
    <property type="resolution" value="3.89 A"/>
    <property type="chains" value="E/J/O=1-334"/>
</dbReference>
<dbReference type="PDB" id="3GLI">
    <property type="method" value="X-ray"/>
    <property type="resolution" value="3.50 A"/>
    <property type="chains" value="E/J=1-334"/>
</dbReference>
<dbReference type="PDB" id="8GIY">
    <property type="method" value="EM"/>
    <property type="resolution" value="3.70 A"/>
    <property type="chains" value="E=1-334"/>
</dbReference>
<dbReference type="PDB" id="8GIZ">
    <property type="method" value="EM"/>
    <property type="resolution" value="2.70 A"/>
    <property type="chains" value="E=1-334"/>
</dbReference>
<dbReference type="PDB" id="8GJ0">
    <property type="method" value="EM"/>
    <property type="resolution" value="2.90 A"/>
    <property type="chains" value="E=1-334"/>
</dbReference>
<dbReference type="PDB" id="8GJ1">
    <property type="method" value="EM"/>
    <property type="resolution" value="3.00 A"/>
    <property type="chains" value="E=1-334"/>
</dbReference>
<dbReference type="PDB" id="8GJ2">
    <property type="method" value="EM"/>
    <property type="resolution" value="2.60 A"/>
    <property type="chains" value="E=1-334"/>
</dbReference>
<dbReference type="PDB" id="8GJ3">
    <property type="method" value="EM"/>
    <property type="resolution" value="2.80 A"/>
    <property type="chains" value="E=1-334"/>
</dbReference>
<dbReference type="PDB" id="8VAL">
    <property type="method" value="EM"/>
    <property type="resolution" value="3.70 A"/>
    <property type="chains" value="E=1-334"/>
</dbReference>
<dbReference type="PDB" id="8VAM">
    <property type="method" value="EM"/>
    <property type="resolution" value="3.90 A"/>
    <property type="chains" value="E=1-334"/>
</dbReference>
<dbReference type="PDB" id="8VAN">
    <property type="method" value="EM"/>
    <property type="resolution" value="7.70 A"/>
    <property type="chains" value="E=1-334"/>
</dbReference>
<dbReference type="PDB" id="8VAP">
    <property type="method" value="EM"/>
    <property type="resolution" value="3.00 A"/>
    <property type="chains" value="E=1-334"/>
</dbReference>
<dbReference type="PDB" id="8VAQ">
    <property type="method" value="EM"/>
    <property type="resolution" value="3.80 A"/>
    <property type="chains" value="E=1-334"/>
</dbReference>
<dbReference type="PDB" id="8VAR">
    <property type="method" value="EM"/>
    <property type="resolution" value="3.90 A"/>
    <property type="chains" value="E=1-334"/>
</dbReference>
<dbReference type="PDB" id="8VAS">
    <property type="method" value="EM"/>
    <property type="resolution" value="3.80 A"/>
    <property type="chains" value="E=1-334"/>
</dbReference>
<dbReference type="PDB" id="8VAT">
    <property type="method" value="EM"/>
    <property type="resolution" value="3.20 A"/>
    <property type="chains" value="E=1-334"/>
</dbReference>
<dbReference type="PDBsum" id="1A5T"/>
<dbReference type="PDBsum" id="1JR3"/>
<dbReference type="PDBsum" id="1XXH"/>
<dbReference type="PDBsum" id="1XXI"/>
<dbReference type="PDBsum" id="3GLF"/>
<dbReference type="PDBsum" id="3GLG"/>
<dbReference type="PDBsum" id="3GLH"/>
<dbReference type="PDBsum" id="3GLI"/>
<dbReference type="PDBsum" id="8GIY"/>
<dbReference type="PDBsum" id="8GIZ"/>
<dbReference type="PDBsum" id="8GJ0"/>
<dbReference type="PDBsum" id="8GJ1"/>
<dbReference type="PDBsum" id="8GJ2"/>
<dbReference type="PDBsum" id="8GJ3"/>
<dbReference type="PDBsum" id="8VAL"/>
<dbReference type="PDBsum" id="8VAM"/>
<dbReference type="PDBsum" id="8VAN"/>
<dbReference type="PDBsum" id="8VAP"/>
<dbReference type="PDBsum" id="8VAQ"/>
<dbReference type="PDBsum" id="8VAR"/>
<dbReference type="PDBsum" id="8VAS"/>
<dbReference type="PDBsum" id="8VAT"/>
<dbReference type="EMDB" id="EMD-40079"/>
<dbReference type="EMDB" id="EMD-40080"/>
<dbReference type="EMDB" id="EMD-40081"/>
<dbReference type="EMDB" id="EMD-40082"/>
<dbReference type="EMDB" id="EMD-40083"/>
<dbReference type="EMDB" id="EMD-40084"/>
<dbReference type="EMDB" id="EMD-43094"/>
<dbReference type="EMDB" id="EMD-43095"/>
<dbReference type="EMDB" id="EMD-43096"/>
<dbReference type="EMDB" id="EMD-43098"/>
<dbReference type="EMDB" id="EMD-43099"/>
<dbReference type="EMDB" id="EMD-43100"/>
<dbReference type="EMDB" id="EMD-43101"/>
<dbReference type="EMDB" id="EMD-43102"/>
<dbReference type="SMR" id="P28631"/>
<dbReference type="BioGRID" id="4263116">
    <property type="interactions" value="184"/>
</dbReference>
<dbReference type="BioGRID" id="850033">
    <property type="interactions" value="3"/>
</dbReference>
<dbReference type="ComplexPortal" id="CPX-1926">
    <property type="entry name" value="DNA polymerase III clamp loader complex"/>
</dbReference>
<dbReference type="DIP" id="DIP-9932N"/>
<dbReference type="FunCoup" id="P28631">
    <property type="interactions" value="237"/>
</dbReference>
<dbReference type="IntAct" id="P28631">
    <property type="interactions" value="25"/>
</dbReference>
<dbReference type="STRING" id="511145.b1099"/>
<dbReference type="jPOST" id="P28631"/>
<dbReference type="PaxDb" id="511145-b1099"/>
<dbReference type="EnsemblBacteria" id="AAC74183">
    <property type="protein sequence ID" value="AAC74183"/>
    <property type="gene ID" value="b1099"/>
</dbReference>
<dbReference type="GeneID" id="75203685"/>
<dbReference type="GeneID" id="945661"/>
<dbReference type="KEGG" id="ecj:JW1085"/>
<dbReference type="KEGG" id="eco:b1099"/>
<dbReference type="KEGG" id="ecoc:C3026_06640"/>
<dbReference type="PATRIC" id="fig|1411691.4.peg.1169"/>
<dbReference type="EchoBASE" id="EB1463"/>
<dbReference type="eggNOG" id="COG0470">
    <property type="taxonomic scope" value="Bacteria"/>
</dbReference>
<dbReference type="HOGENOM" id="CLU_006229_4_3_6"/>
<dbReference type="InParanoid" id="P28631"/>
<dbReference type="OMA" id="FAQGNHP"/>
<dbReference type="OrthoDB" id="9811073at2"/>
<dbReference type="PhylomeDB" id="P28631"/>
<dbReference type="BioCyc" id="EcoCyc:EG11500-MONOMER"/>
<dbReference type="BioCyc" id="MetaCyc:EG11500-MONOMER"/>
<dbReference type="BRENDA" id="3.6.4.B8">
    <property type="organism ID" value="2026"/>
</dbReference>
<dbReference type="EvolutionaryTrace" id="P28631"/>
<dbReference type="PRO" id="PR:P28631"/>
<dbReference type="Proteomes" id="UP000000625">
    <property type="component" value="Chromosome"/>
</dbReference>
<dbReference type="GO" id="GO:0009360">
    <property type="term" value="C:DNA polymerase III complex"/>
    <property type="evidence" value="ECO:0000314"/>
    <property type="project" value="EcoCyc"/>
</dbReference>
<dbReference type="GO" id="GO:0043846">
    <property type="term" value="C:DNA polymerase III, clamp loader complex"/>
    <property type="evidence" value="ECO:0000353"/>
    <property type="project" value="ComplexPortal"/>
</dbReference>
<dbReference type="GO" id="GO:0030894">
    <property type="term" value="C:replisome"/>
    <property type="evidence" value="ECO:0000303"/>
    <property type="project" value="ComplexPortal"/>
</dbReference>
<dbReference type="GO" id="GO:0008408">
    <property type="term" value="F:3'-5' exonuclease activity"/>
    <property type="evidence" value="ECO:0007669"/>
    <property type="project" value="InterPro"/>
</dbReference>
<dbReference type="GO" id="GO:0003677">
    <property type="term" value="F:DNA binding"/>
    <property type="evidence" value="ECO:0007669"/>
    <property type="project" value="InterPro"/>
</dbReference>
<dbReference type="GO" id="GO:0003689">
    <property type="term" value="F:DNA clamp loader activity"/>
    <property type="evidence" value="ECO:0000314"/>
    <property type="project" value="EcoCyc"/>
</dbReference>
<dbReference type="GO" id="GO:0003887">
    <property type="term" value="F:DNA-directed DNA polymerase activity"/>
    <property type="evidence" value="ECO:0007669"/>
    <property type="project" value="UniProtKB-KW"/>
</dbReference>
<dbReference type="GO" id="GO:0006260">
    <property type="term" value="P:DNA replication"/>
    <property type="evidence" value="ECO:0000303"/>
    <property type="project" value="ComplexPortal"/>
</dbReference>
<dbReference type="GO" id="GO:0006261">
    <property type="term" value="P:DNA-templated DNA replication"/>
    <property type="evidence" value="ECO:0000314"/>
    <property type="project" value="EcoCyc"/>
</dbReference>
<dbReference type="FunFam" id="1.10.8.10:FF:000063">
    <property type="entry name" value="DNA polymerase III subunit delta"/>
    <property type="match status" value="1"/>
</dbReference>
<dbReference type="FunFam" id="1.20.272.10:FF:000012">
    <property type="entry name" value="DNA polymerase III subunit delta"/>
    <property type="match status" value="1"/>
</dbReference>
<dbReference type="FunFam" id="3.40.50.300:FF:000890">
    <property type="entry name" value="DNA polymerase III subunit delta"/>
    <property type="match status" value="1"/>
</dbReference>
<dbReference type="Gene3D" id="1.20.272.10">
    <property type="match status" value="1"/>
</dbReference>
<dbReference type="Gene3D" id="1.10.8.10">
    <property type="entry name" value="DNA helicase RuvA subunit, C-terminal domain"/>
    <property type="match status" value="1"/>
</dbReference>
<dbReference type="Gene3D" id="3.40.50.300">
    <property type="entry name" value="P-loop containing nucleotide triphosphate hydrolases"/>
    <property type="match status" value="1"/>
</dbReference>
<dbReference type="InterPro" id="IPR008921">
    <property type="entry name" value="DNA_pol3_clamp-load_cplx_C"/>
</dbReference>
<dbReference type="InterPro" id="IPR004622">
    <property type="entry name" value="DNA_pol_HolB"/>
</dbReference>
<dbReference type="InterPro" id="IPR015199">
    <property type="entry name" value="DNA_pol_III_delta_C"/>
</dbReference>
<dbReference type="InterPro" id="IPR050238">
    <property type="entry name" value="DNA_Rep/Repair_Clamp_Loader"/>
</dbReference>
<dbReference type="InterPro" id="IPR048731">
    <property type="entry name" value="HolB_lid-gammaproteobact"/>
</dbReference>
<dbReference type="InterPro" id="IPR027417">
    <property type="entry name" value="P-loop_NTPase"/>
</dbReference>
<dbReference type="NCBIfam" id="TIGR00678">
    <property type="entry name" value="holB"/>
    <property type="match status" value="1"/>
</dbReference>
<dbReference type="NCBIfam" id="NF005941">
    <property type="entry name" value="PRK07993.1"/>
    <property type="match status" value="1"/>
</dbReference>
<dbReference type="PANTHER" id="PTHR11669:SF8">
    <property type="entry name" value="DNA POLYMERASE III SUBUNIT DELTA"/>
    <property type="match status" value="1"/>
</dbReference>
<dbReference type="PANTHER" id="PTHR11669">
    <property type="entry name" value="REPLICATION FACTOR C / DNA POLYMERASE III GAMMA-TAU SUBUNIT"/>
    <property type="match status" value="1"/>
</dbReference>
<dbReference type="Pfam" id="PF13177">
    <property type="entry name" value="DNA_pol3_delta2"/>
    <property type="match status" value="1"/>
</dbReference>
<dbReference type="Pfam" id="PF09115">
    <property type="entry name" value="DNApol3-delta_C"/>
    <property type="match status" value="1"/>
</dbReference>
<dbReference type="Pfam" id="PF21500">
    <property type="entry name" value="HolB_lid"/>
    <property type="match status" value="1"/>
</dbReference>
<dbReference type="SUPFAM" id="SSF52540">
    <property type="entry name" value="P-loop containing nucleoside triphosphate hydrolases"/>
    <property type="match status" value="1"/>
</dbReference>
<dbReference type="SUPFAM" id="SSF48019">
    <property type="entry name" value="post-AAA+ oligomerization domain-like"/>
    <property type="match status" value="1"/>
</dbReference>
<comment type="function">
    <text evidence="2 5">Part of the beta sliding clamp loading complex, which hydrolyzes ATP to load the beta clamp onto primed DNA to form the DNA replication pre-initiation complex (PubMed:2040637). DNA polymerase III is a complex, multichain enzyme responsible for most of the replicative synthesis in bacteria. This DNA polymerase also exhibits 3' to 5' exonuclease activity. The gamma complex (gamma(3),delta,delta') is thought to load beta dimers onto DNA by binding ATP which alters the complex's conformation so it can bind beta sliding clamp dimers and open them at one interface. Primed DNA is recognized, ATP is hydrolyzed releasing the gamma complex and closing the beta sliding clamp ring around the primed DNA (PubMed:9927437).</text>
</comment>
<comment type="catalytic activity">
    <reaction>
        <text>DNA(n) + a 2'-deoxyribonucleoside 5'-triphosphate = DNA(n+1) + diphosphate</text>
        <dbReference type="Rhea" id="RHEA:22508"/>
        <dbReference type="Rhea" id="RHEA-COMP:17339"/>
        <dbReference type="Rhea" id="RHEA-COMP:17340"/>
        <dbReference type="ChEBI" id="CHEBI:33019"/>
        <dbReference type="ChEBI" id="CHEBI:61560"/>
        <dbReference type="ChEBI" id="CHEBI:173112"/>
        <dbReference type="EC" id="2.7.7.7"/>
    </reaction>
</comment>
<comment type="subunit">
    <text evidence="1 2 3 4 5">The DNA polymerase III holoenzyme complex contains at least 10 different subunits organized into 3 functionally essential subassemblies: the Pol III core, the beta sliding clamp processivity factor and the clamp-loading complex. The Pol III core (subunits alpha, epsilon and theta) contains the polymerase and the 3'-5' exonuclease proofreading activities (PubMed:2040637). The polymerase is tethered to the template via the dimeric beta sliding clamp processivity factor. The clamp-loading complex (also called gamma complex) assembles the beta sliding clamp onto the primed template and plays a central role in the organization and communication at the replication fork. The clamp-loading complex contains delta, delta', psi and chi, and 3 copies of either or both of two different DnaX proteins, gamma and tau. The DNA replisome complex has a single clamp loader (3 tau and 1 each of delta, delta', psi and chi subunits) which binds 3 Pol III cores (1 core on the leading strand and 2 on the lagging strand) each with a beta sliding clamp dimer. Additional proteins in the replisome are other copies of gamma, psi and chi, Ssb, DNA helicase and RNA primase (PubMed:20413500, PubMed:22157955). The clamp loader hydrolyzes ATP to assemble the beta processivity factor onto the primed template (PubMed:2040637, PubMed:9927437) and plays a central role in the organization and communication at the replication fork; the minimal complex to load the beta sliding clamp on DNA is delta, delta', gamma (PubMed:9927437).</text>
</comment>
<comment type="interaction">
    <interactant intactId="EBI-549161">
        <id>P28631</id>
    </interactant>
    <interactant intactId="EBI-549140">
        <id>P06710</id>
        <label>dnaX</label>
    </interactant>
    <organismsDiffer>false</organismsDiffer>
    <experiments>26</experiments>
</comment>
<comment type="interaction">
    <interactant intactId="EBI-549161">
        <id>P28631</id>
    </interactant>
    <interactant intactId="EBI-6464728">
        <id>P06710-1</id>
        <label>dnaX</label>
    </interactant>
    <organismsDiffer>false</organismsDiffer>
    <experiments>6</experiments>
</comment>
<comment type="interaction">
    <interactant intactId="EBI-549161">
        <id>P28631</id>
    </interactant>
    <interactant intactId="EBI-549153">
        <id>P28630</id>
        <label>holA</label>
    </interactant>
    <organismsDiffer>false</organismsDiffer>
    <experiments>19</experiments>
</comment>
<comment type="interaction">
    <interactant intactId="EBI-549161">
        <id>P28631</id>
    </interactant>
    <interactant intactId="EBI-549169">
        <id>P28905</id>
        <label>holC</label>
    </interactant>
    <organismsDiffer>false</organismsDiffer>
    <experiments>6</experiments>
</comment>
<comment type="interaction">
    <interactant intactId="EBI-549161">
        <id>P28631</id>
    </interactant>
    <interactant intactId="EBI-554913">
        <id>P23367</id>
        <label>mutL</label>
    </interactant>
    <organismsDiffer>false</organismsDiffer>
    <experiments>2</experiments>
</comment>
<comment type="interaction">
    <interactant intactId="EBI-549161">
        <id>P28631</id>
    </interactant>
    <interactant intactId="EBI-543024">
        <id>P0A7M2</id>
        <label>rpmB</label>
    </interactant>
    <organismsDiffer>false</organismsDiffer>
    <experiments>3</experiments>
</comment>
<gene>
    <name type="primary">holB</name>
    <name type="ordered locus">b1099</name>
    <name type="ordered locus">JW1085</name>
</gene>
<feature type="chain" id="PRO_0000105513" description="DNA polymerase III subunit delta'">
    <location>
        <begin position="1"/>
        <end position="334"/>
    </location>
</feature>
<feature type="sequence conflict" description="In Ref. 1; AAA23708." evidence="6" ref="1">
    <original>P</original>
    <variation>G</variation>
    <location>
        <position position="166"/>
    </location>
</feature>
<feature type="helix" evidence="8">
    <location>
        <begin position="5"/>
        <end position="7"/>
    </location>
</feature>
<feature type="helix" evidence="8">
    <location>
        <begin position="8"/>
        <end position="19"/>
    </location>
</feature>
<feature type="strand" evidence="8">
    <location>
        <begin position="25"/>
        <end position="30"/>
    </location>
</feature>
<feature type="helix" evidence="8">
    <location>
        <begin position="37"/>
        <end position="48"/>
    </location>
</feature>
<feature type="strand" evidence="10">
    <location>
        <begin position="55"/>
        <end position="57"/>
    </location>
</feature>
<feature type="strand" evidence="11">
    <location>
        <begin position="60"/>
        <end position="62"/>
    </location>
</feature>
<feature type="helix" evidence="8">
    <location>
        <begin position="63"/>
        <end position="70"/>
    </location>
</feature>
<feature type="strand" evidence="8">
    <location>
        <begin position="76"/>
        <end position="79"/>
    </location>
</feature>
<feature type="strand" evidence="8">
    <location>
        <begin position="86"/>
        <end position="88"/>
    </location>
</feature>
<feature type="helix" evidence="8">
    <location>
        <begin position="90"/>
        <end position="99"/>
    </location>
</feature>
<feature type="strand" evidence="12">
    <location>
        <begin position="105"/>
        <end position="108"/>
    </location>
</feature>
<feature type="strand" evidence="8">
    <location>
        <begin position="110"/>
        <end position="115"/>
    </location>
</feature>
<feature type="helix" evidence="8">
    <location>
        <begin position="117"/>
        <end position="119"/>
    </location>
</feature>
<feature type="helix" evidence="8">
    <location>
        <begin position="122"/>
        <end position="132"/>
    </location>
</feature>
<feature type="strand" evidence="8">
    <location>
        <begin position="139"/>
        <end position="146"/>
    </location>
</feature>
<feature type="helix" evidence="8">
    <location>
        <begin position="148"/>
        <end position="150"/>
    </location>
</feature>
<feature type="helix" evidence="8">
    <location>
        <begin position="153"/>
        <end position="156"/>
    </location>
</feature>
<feature type="strand" evidence="8">
    <location>
        <begin position="159"/>
        <end position="163"/>
    </location>
</feature>
<feature type="helix" evidence="8">
    <location>
        <begin position="169"/>
        <end position="179"/>
    </location>
</feature>
<feature type="helix" evidence="8">
    <location>
        <begin position="184"/>
        <end position="193"/>
    </location>
</feature>
<feature type="turn" evidence="8">
    <location>
        <begin position="194"/>
        <end position="196"/>
    </location>
</feature>
<feature type="helix" evidence="8">
    <location>
        <begin position="198"/>
        <end position="203"/>
    </location>
</feature>
<feature type="helix" evidence="8">
    <location>
        <begin position="208"/>
        <end position="226"/>
    </location>
</feature>
<feature type="helix" evidence="8">
    <location>
        <begin position="230"/>
        <end position="232"/>
    </location>
</feature>
<feature type="helix" evidence="8">
    <location>
        <begin position="233"/>
        <end position="236"/>
    </location>
</feature>
<feature type="helix" evidence="8">
    <location>
        <begin position="241"/>
        <end position="255"/>
    </location>
</feature>
<feature type="turn" evidence="9">
    <location>
        <begin position="259"/>
        <end position="261"/>
    </location>
</feature>
<feature type="turn" evidence="10">
    <location>
        <begin position="266"/>
        <end position="269"/>
    </location>
</feature>
<feature type="helix" evidence="8">
    <location>
        <begin position="271"/>
        <end position="280"/>
    </location>
</feature>
<feature type="helix" evidence="8">
    <location>
        <begin position="283"/>
        <end position="303"/>
    </location>
</feature>
<feature type="helix" evidence="8">
    <location>
        <begin position="308"/>
        <end position="322"/>
    </location>
</feature>
<feature type="strand" evidence="12">
    <location>
        <begin position="324"/>
        <end position="326"/>
    </location>
</feature>
<evidence type="ECO:0000269" key="1">
    <source>
    </source>
</evidence>
<evidence type="ECO:0000269" key="2">
    <source>
    </source>
</evidence>
<evidence type="ECO:0000269" key="3">
    <source>
    </source>
</evidence>
<evidence type="ECO:0000269" key="4">
    <source>
    </source>
</evidence>
<evidence type="ECO:0000269" key="5">
    <source>
    </source>
</evidence>
<evidence type="ECO:0000305" key="6"/>
<evidence type="ECO:0007744" key="7">
    <source>
        <dbReference type="PDB" id="1JR3"/>
    </source>
</evidence>
<evidence type="ECO:0007829" key="8">
    <source>
        <dbReference type="PDB" id="1A5T"/>
    </source>
</evidence>
<evidence type="ECO:0007829" key="9">
    <source>
        <dbReference type="PDB" id="3GLG"/>
    </source>
</evidence>
<evidence type="ECO:0007829" key="10">
    <source>
        <dbReference type="PDB" id="8GIZ"/>
    </source>
</evidence>
<evidence type="ECO:0007829" key="11">
    <source>
        <dbReference type="PDB" id="8GJ2"/>
    </source>
</evidence>
<evidence type="ECO:0007829" key="12">
    <source>
        <dbReference type="PDB" id="8GJ3"/>
    </source>
</evidence>
<sequence>MRWYPWLRPDFEKLVASYQAGRGHHALLIQALPGMGDDALIYALSRYLLCQQPQGHKSCGHCRGCQLMQAGTHPDYYTLAPEKGKNTLGVDAVREVTEKLNEHARLGGAKVVWVTDAALLTDAAANALLKTLEEPPAETWFFLATREPERLLATLRSRCRLHYLAPPPEQYAVTWLSREVTMSQDALLAALRLSAGSPGAALALFQGDNWQARETLCQALAYSVPSGDWYSLLAALNHEQAPARLHWLATLLMDALKRHHGAAQVTNVDVPGLVAELANHLSPSRLQAILGDVCHIREQLMSVTGINRELLITDLLLRIEHYLQPGVVLPVPHL</sequence>
<accession>P28631</accession>
<name>HOLB_ECOLI</name>
<protein>
    <recommendedName>
        <fullName>DNA polymerase III subunit delta'</fullName>
        <ecNumber>2.7.7.7</ecNumber>
    </recommendedName>
</protein>
<reference key="1">
    <citation type="journal article" date="1993" name="J. Biol. Chem.">
        <title>DNA polymerase III accessory proteins. I. holA and holB encoding delta and delta'.</title>
        <authorList>
            <person name="Dong Z."/>
            <person name="Onrust R."/>
            <person name="Skangalis M."/>
            <person name="O'Donnell M."/>
        </authorList>
    </citation>
    <scope>NUCLEOTIDE SEQUENCE [GENOMIC DNA]</scope>
    <source>
        <strain>K12</strain>
    </source>
</reference>
<reference key="2">
    <citation type="journal article" date="1993" name="J. Bacteriol.">
        <title>Identification, isolation, and characterization of the structural gene encoding the delta' subunit of Escherichia coli DNA polymerase III holoenzyme.</title>
        <authorList>
            <person name="Carter J.R."/>
            <person name="Franden M.A."/>
            <person name="Aebersold R.H."/>
            <person name="McHenry C.S."/>
        </authorList>
    </citation>
    <scope>NUCLEOTIDE SEQUENCE [GENOMIC DNA]</scope>
    <source>
        <strain>K12 / MG1655 / ATCC 47076</strain>
    </source>
</reference>
<reference key="3">
    <citation type="journal article" date="1996" name="DNA Res.">
        <title>A 718-kb DNA sequence of the Escherichia coli K-12 genome corresponding to the 12.7-28.0 min region on the linkage map.</title>
        <authorList>
            <person name="Oshima T."/>
            <person name="Aiba H."/>
            <person name="Baba T."/>
            <person name="Fujita K."/>
            <person name="Hayashi K."/>
            <person name="Honjo A."/>
            <person name="Ikemoto K."/>
            <person name="Inada T."/>
            <person name="Itoh T."/>
            <person name="Kajihara M."/>
            <person name="Kanai K."/>
            <person name="Kashimoto K."/>
            <person name="Kimura S."/>
            <person name="Kitagawa M."/>
            <person name="Makino K."/>
            <person name="Masuda S."/>
            <person name="Miki T."/>
            <person name="Mizobuchi K."/>
            <person name="Mori H."/>
            <person name="Motomura K."/>
            <person name="Nakamura Y."/>
            <person name="Nashimoto H."/>
            <person name="Nishio Y."/>
            <person name="Saito N."/>
            <person name="Sampei G."/>
            <person name="Seki Y."/>
            <person name="Tagami H."/>
            <person name="Takemoto K."/>
            <person name="Wada C."/>
            <person name="Yamamoto Y."/>
            <person name="Yano M."/>
            <person name="Horiuchi T."/>
        </authorList>
    </citation>
    <scope>NUCLEOTIDE SEQUENCE [LARGE SCALE GENOMIC DNA]</scope>
    <source>
        <strain>K12 / W3110 / ATCC 27325 / DSM 5911</strain>
    </source>
</reference>
<reference key="4">
    <citation type="journal article" date="1997" name="Science">
        <title>The complete genome sequence of Escherichia coli K-12.</title>
        <authorList>
            <person name="Blattner F.R."/>
            <person name="Plunkett G. III"/>
            <person name="Bloch C.A."/>
            <person name="Perna N.T."/>
            <person name="Burland V."/>
            <person name="Riley M."/>
            <person name="Collado-Vides J."/>
            <person name="Glasner J.D."/>
            <person name="Rode C.K."/>
            <person name="Mayhew G.F."/>
            <person name="Gregor J."/>
            <person name="Davis N.W."/>
            <person name="Kirkpatrick H.A."/>
            <person name="Goeden M.A."/>
            <person name="Rose D.J."/>
            <person name="Mau B."/>
            <person name="Shao Y."/>
        </authorList>
    </citation>
    <scope>NUCLEOTIDE SEQUENCE [LARGE SCALE GENOMIC DNA]</scope>
    <source>
        <strain>K12 / MG1655 / ATCC 47076</strain>
    </source>
</reference>
<reference key="5">
    <citation type="journal article" date="2006" name="Mol. Syst. Biol.">
        <title>Highly accurate genome sequences of Escherichia coli K-12 strains MG1655 and W3110.</title>
        <authorList>
            <person name="Hayashi K."/>
            <person name="Morooka N."/>
            <person name="Yamamoto Y."/>
            <person name="Fujita K."/>
            <person name="Isono K."/>
            <person name="Choi S."/>
            <person name="Ohtsubo E."/>
            <person name="Baba T."/>
            <person name="Wanner B.L."/>
            <person name="Mori H."/>
            <person name="Horiuchi T."/>
        </authorList>
    </citation>
    <scope>NUCLEOTIDE SEQUENCE [LARGE SCALE GENOMIC DNA]</scope>
    <source>
        <strain>K12 / W3110 / ATCC 27325 / DSM 5911</strain>
    </source>
</reference>
<reference key="6">
    <citation type="journal article" date="1993" name="J. Biol. Chem.">
        <title>DNA polymerase III accessory proteins. II. Characterization of delta and delta'.</title>
        <authorList>
            <person name="Onrust R."/>
            <person name="O'Donnell M."/>
        </authorList>
    </citation>
    <scope>CHARACTERIZATION</scope>
</reference>
<reference key="7">
    <citation type="journal article" date="1991" name="J. Biol. Chem.">
        <title>Mechanism of the sliding beta-clamp of DNA polymerase III holoenzyme.</title>
        <authorList>
            <person name="Stukenberg P.T."/>
            <person name="Studwell-Vaughan P.S."/>
            <person name="O'Donnell M."/>
        </authorList>
    </citation>
    <scope>FUNCTION</scope>
    <scope>SUBUNIT</scope>
</reference>
<reference key="8">
    <citation type="journal article" date="1992" name="Bioessays">
        <title>Accessory protein function in the DNA polymerase III holoenzyme from E. coli.</title>
        <authorList>
            <person name="O'Donnell M."/>
        </authorList>
    </citation>
    <scope>REVIEW</scope>
</reference>
<reference key="9">
    <citation type="journal article" date="1997" name="Cell">
        <title>Crystal structure of the delta' subunit of the clamp-loader complex of E. coli DNA polymerase III.</title>
        <authorList>
            <person name="Guenther B."/>
            <person name="Onrust R."/>
            <person name="Sali A."/>
            <person name="O'Donnell M."/>
            <person name="Kuriyan J."/>
        </authorList>
    </citation>
    <scope>X-RAY CRYSTALLOGRAPHY (2.2 ANGSTROMS)</scope>
</reference>
<reference key="10">
    <citation type="journal article" date="1999" name="EMBO J.">
        <title>The internal workings of a DNA polymerase clamp-loading machine.</title>
        <authorList>
            <person name="Turner J."/>
            <person name="Hingorani M.M."/>
            <person name="Kelman Z."/>
            <person name="O'Donnell M."/>
        </authorList>
    </citation>
    <scope>FUNCTION</scope>
    <scope>SUBUNIT</scope>
</reference>
<reference key="11">
    <citation type="journal article" date="2010" name="Science">
        <title>Stoichiometry and architecture of active DNA replication machinery in Escherichia coli.</title>
        <authorList>
            <person name="Reyes-Lamothe R."/>
            <person name="Sherratt D.J."/>
            <person name="Leake M.C."/>
        </authorList>
    </citation>
    <scope>REPLISOME COMPLEX</scope>
    <scope>SUBUNIT</scope>
</reference>
<reference key="12">
    <citation type="journal article" date="2011" name="Nat. Struct. Mol. Biol.">
        <title>Single-molecule studies reveal the function of a third polymerase in the replisome.</title>
        <authorList>
            <person name="Georgescu R.E."/>
            <person name="Kurth I."/>
            <person name="O'Donnell M.E."/>
        </authorList>
    </citation>
    <scope>REPLISOME COMPLEX</scope>
    <scope>SUBUNIT</scope>
</reference>
<reference evidence="7" key="13">
    <citation type="journal article" date="2001" name="Cell">
        <title>Crystal structure of the processivity clamp loader gamma (gamma) complex of E. coli DNA polymerase III.</title>
        <authorList>
            <person name="Jeruzalmi D."/>
            <person name="O'Donnell M."/>
            <person name="Kuriyan J."/>
        </authorList>
    </citation>
    <scope>X-RAY CRYSTALLOGRAPHY (2.70 ANGSTROMS) IN COMPLEX WITH HOLA AND DNAX (ISOFORM GAMMA)</scope>
</reference>
<keyword id="KW-0002">3D-structure</keyword>
<keyword id="KW-0235">DNA replication</keyword>
<keyword id="KW-0239">DNA-directed DNA polymerase</keyword>
<keyword id="KW-0548">Nucleotidyltransferase</keyword>
<keyword id="KW-1185">Reference proteome</keyword>
<keyword id="KW-0808">Transferase</keyword>
<organism>
    <name type="scientific">Escherichia coli (strain K12)</name>
    <dbReference type="NCBI Taxonomy" id="83333"/>
    <lineage>
        <taxon>Bacteria</taxon>
        <taxon>Pseudomonadati</taxon>
        <taxon>Pseudomonadota</taxon>
        <taxon>Gammaproteobacteria</taxon>
        <taxon>Enterobacterales</taxon>
        <taxon>Enterobacteriaceae</taxon>
        <taxon>Escherichia</taxon>
    </lineage>
</organism>
<proteinExistence type="evidence at protein level"/>